<dbReference type="EC" id="3.2.2.27" evidence="1"/>
<dbReference type="EMBL" id="CP000259">
    <property type="protein sequence ID" value="ABF31952.1"/>
    <property type="molecule type" value="Genomic_DNA"/>
</dbReference>
<dbReference type="RefSeq" id="WP_002984913.1">
    <property type="nucleotide sequence ID" value="NC_008021.1"/>
</dbReference>
<dbReference type="SMR" id="Q1JM60"/>
<dbReference type="KEGG" id="spk:MGAS9429_Spy0764"/>
<dbReference type="HOGENOM" id="CLU_032162_3_1_9"/>
<dbReference type="Proteomes" id="UP000002433">
    <property type="component" value="Chromosome"/>
</dbReference>
<dbReference type="GO" id="GO:0005737">
    <property type="term" value="C:cytoplasm"/>
    <property type="evidence" value="ECO:0007669"/>
    <property type="project" value="UniProtKB-SubCell"/>
</dbReference>
<dbReference type="GO" id="GO:0004844">
    <property type="term" value="F:uracil DNA N-glycosylase activity"/>
    <property type="evidence" value="ECO:0007669"/>
    <property type="project" value="UniProtKB-UniRule"/>
</dbReference>
<dbReference type="GO" id="GO:0097510">
    <property type="term" value="P:base-excision repair, AP site formation via deaminated base removal"/>
    <property type="evidence" value="ECO:0007669"/>
    <property type="project" value="TreeGrafter"/>
</dbReference>
<dbReference type="CDD" id="cd10027">
    <property type="entry name" value="UDG-F1-like"/>
    <property type="match status" value="1"/>
</dbReference>
<dbReference type="FunFam" id="3.40.470.10:FF:000008">
    <property type="entry name" value="Uracil-DNA glycosylase"/>
    <property type="match status" value="1"/>
</dbReference>
<dbReference type="Gene3D" id="3.40.470.10">
    <property type="entry name" value="Uracil-DNA glycosylase-like domain"/>
    <property type="match status" value="1"/>
</dbReference>
<dbReference type="HAMAP" id="MF_00148">
    <property type="entry name" value="UDG"/>
    <property type="match status" value="1"/>
</dbReference>
<dbReference type="InterPro" id="IPR002043">
    <property type="entry name" value="UDG_fam1"/>
</dbReference>
<dbReference type="InterPro" id="IPR018085">
    <property type="entry name" value="Ura-DNA_Glyclase_AS"/>
</dbReference>
<dbReference type="InterPro" id="IPR005122">
    <property type="entry name" value="Uracil-DNA_glycosylase-like"/>
</dbReference>
<dbReference type="InterPro" id="IPR036895">
    <property type="entry name" value="Uracil-DNA_glycosylase-like_sf"/>
</dbReference>
<dbReference type="NCBIfam" id="NF003588">
    <property type="entry name" value="PRK05254.1-1"/>
    <property type="match status" value="1"/>
</dbReference>
<dbReference type="NCBIfam" id="NF003589">
    <property type="entry name" value="PRK05254.1-2"/>
    <property type="match status" value="1"/>
</dbReference>
<dbReference type="NCBIfam" id="NF003592">
    <property type="entry name" value="PRK05254.1-5"/>
    <property type="match status" value="1"/>
</dbReference>
<dbReference type="NCBIfam" id="TIGR00628">
    <property type="entry name" value="ung"/>
    <property type="match status" value="1"/>
</dbReference>
<dbReference type="PANTHER" id="PTHR11264">
    <property type="entry name" value="URACIL-DNA GLYCOSYLASE"/>
    <property type="match status" value="1"/>
</dbReference>
<dbReference type="PANTHER" id="PTHR11264:SF0">
    <property type="entry name" value="URACIL-DNA GLYCOSYLASE"/>
    <property type="match status" value="1"/>
</dbReference>
<dbReference type="Pfam" id="PF03167">
    <property type="entry name" value="UDG"/>
    <property type="match status" value="1"/>
</dbReference>
<dbReference type="SMART" id="SM00986">
    <property type="entry name" value="UDG"/>
    <property type="match status" value="1"/>
</dbReference>
<dbReference type="SMART" id="SM00987">
    <property type="entry name" value="UreE_C"/>
    <property type="match status" value="1"/>
</dbReference>
<dbReference type="SUPFAM" id="SSF52141">
    <property type="entry name" value="Uracil-DNA glycosylase-like"/>
    <property type="match status" value="1"/>
</dbReference>
<dbReference type="PROSITE" id="PS00130">
    <property type="entry name" value="U_DNA_GLYCOSYLASE"/>
    <property type="match status" value="1"/>
</dbReference>
<feature type="chain" id="PRO_1000009951" description="Uracil-DNA glycosylase">
    <location>
        <begin position="1"/>
        <end position="217"/>
    </location>
</feature>
<feature type="active site" description="Proton acceptor" evidence="1">
    <location>
        <position position="62"/>
    </location>
</feature>
<comment type="function">
    <text evidence="1">Excises uracil residues from the DNA which can arise as a result of misincorporation of dUMP residues by DNA polymerase or due to deamination of cytosine.</text>
</comment>
<comment type="catalytic activity">
    <reaction evidence="1">
        <text>Hydrolyzes single-stranded DNA or mismatched double-stranded DNA and polynucleotides, releasing free uracil.</text>
        <dbReference type="EC" id="3.2.2.27"/>
    </reaction>
</comment>
<comment type="subcellular location">
    <subcellularLocation>
        <location evidence="1">Cytoplasm</location>
    </subcellularLocation>
</comment>
<comment type="similarity">
    <text evidence="1">Belongs to the uracil-DNA glycosylase (UDG) superfamily. UNG family.</text>
</comment>
<evidence type="ECO:0000255" key="1">
    <source>
        <dbReference type="HAMAP-Rule" id="MF_00148"/>
    </source>
</evidence>
<gene>
    <name evidence="1" type="primary">ung</name>
    <name type="ordered locus">MGAS9429_Spy0764</name>
</gene>
<proteinExistence type="inferred from homology"/>
<protein>
    <recommendedName>
        <fullName evidence="1">Uracil-DNA glycosylase</fullName>
        <shortName evidence="1">UDG</shortName>
        <ecNumber evidence="1">3.2.2.27</ecNumber>
    </recommendedName>
</protein>
<name>UNG_STRPC</name>
<organism>
    <name type="scientific">Streptococcus pyogenes serotype M12 (strain MGAS9429)</name>
    <dbReference type="NCBI Taxonomy" id="370551"/>
    <lineage>
        <taxon>Bacteria</taxon>
        <taxon>Bacillati</taxon>
        <taxon>Bacillota</taxon>
        <taxon>Bacilli</taxon>
        <taxon>Lactobacillales</taxon>
        <taxon>Streptococcaceae</taxon>
        <taxon>Streptococcus</taxon>
    </lineage>
</organism>
<sequence>MAHSIWHEKIKSFLPEHYYGRINHFLDEAYASGLVYPPRENVFKALQVTPLEETKVLILGQDPYHGPKQAQGLSFSVPEEISAPPSLINILKELADDIGPRDHHDLSTWASQGVLLLNACLTVPAGQANGHAGLIWEPFTDAVIKVLNEKDSPVVFILWGAYARKKKAFITNPKHHIIESPHPSPLSSYRGFFGSKPFSRTNAILEKEGMTGVDWLK</sequence>
<reference key="1">
    <citation type="journal article" date="2006" name="Proc. Natl. Acad. Sci. U.S.A.">
        <title>Molecular genetic anatomy of inter- and intraserotype variation in the human bacterial pathogen group A Streptococcus.</title>
        <authorList>
            <person name="Beres S.B."/>
            <person name="Richter E.W."/>
            <person name="Nagiec M.J."/>
            <person name="Sumby P."/>
            <person name="Porcella S.F."/>
            <person name="DeLeo F.R."/>
            <person name="Musser J.M."/>
        </authorList>
    </citation>
    <scope>NUCLEOTIDE SEQUENCE [LARGE SCALE GENOMIC DNA]</scope>
    <source>
        <strain>MGAS9429</strain>
    </source>
</reference>
<keyword id="KW-0963">Cytoplasm</keyword>
<keyword id="KW-0227">DNA damage</keyword>
<keyword id="KW-0234">DNA repair</keyword>
<keyword id="KW-0378">Hydrolase</keyword>
<accession>Q1JM60</accession>